<gene>
    <name evidence="2" type="primary">psbD</name>
    <name type="ordered locus">GuabCp016</name>
</gene>
<keyword id="KW-0007">Acetylation</keyword>
<keyword id="KW-0148">Chlorophyll</keyword>
<keyword id="KW-0150">Chloroplast</keyword>
<keyword id="KW-0157">Chromophore</keyword>
<keyword id="KW-0249">Electron transport</keyword>
<keyword id="KW-0408">Iron</keyword>
<keyword id="KW-0460">Magnesium</keyword>
<keyword id="KW-0472">Membrane</keyword>
<keyword id="KW-0479">Metal-binding</keyword>
<keyword id="KW-0560">Oxidoreductase</keyword>
<keyword id="KW-0597">Phosphoprotein</keyword>
<keyword id="KW-0602">Photosynthesis</keyword>
<keyword id="KW-0604">Photosystem II</keyword>
<keyword id="KW-0934">Plastid</keyword>
<keyword id="KW-0793">Thylakoid</keyword>
<keyword id="KW-0812">Transmembrane</keyword>
<keyword id="KW-1133">Transmembrane helix</keyword>
<keyword id="KW-0813">Transport</keyword>
<organism>
    <name type="scientific">Guizotia abyssinica</name>
    <name type="common">Niger</name>
    <name type="synonym">Ramtilla</name>
    <dbReference type="NCBI Taxonomy" id="4230"/>
    <lineage>
        <taxon>Eukaryota</taxon>
        <taxon>Viridiplantae</taxon>
        <taxon>Streptophyta</taxon>
        <taxon>Embryophyta</taxon>
        <taxon>Tracheophyta</taxon>
        <taxon>Spermatophyta</taxon>
        <taxon>Magnoliopsida</taxon>
        <taxon>eudicotyledons</taxon>
        <taxon>Gunneridae</taxon>
        <taxon>Pentapetalae</taxon>
        <taxon>asterids</taxon>
        <taxon>campanulids</taxon>
        <taxon>Asterales</taxon>
        <taxon>Asteraceae</taxon>
        <taxon>Asteroideae</taxon>
        <taxon>Heliantheae alliance</taxon>
        <taxon>Millerieae</taxon>
        <taxon>Guizotia</taxon>
    </lineage>
</organism>
<name>PSBD_GUIAB</name>
<comment type="function">
    <text evidence="2">Photosystem II (PSII) is a light-driven water:plastoquinone oxidoreductase that uses light energy to abstract electrons from H(2)O, generating O(2) and a proton gradient subsequently used for ATP formation. It consists of a core antenna complex that captures photons, and an electron transfer chain that converts photonic excitation into a charge separation. The D1/D2 (PsbA/PsbD) reaction center heterodimer binds P680, the primary electron donor of PSII as well as several subsequent electron acceptors. D2 is needed for assembly of a stable PSII complex.</text>
</comment>
<comment type="catalytic activity">
    <reaction evidence="2">
        <text>2 a plastoquinone + 4 hnu + 2 H2O = 2 a plastoquinol + O2</text>
        <dbReference type="Rhea" id="RHEA:36359"/>
        <dbReference type="Rhea" id="RHEA-COMP:9561"/>
        <dbReference type="Rhea" id="RHEA-COMP:9562"/>
        <dbReference type="ChEBI" id="CHEBI:15377"/>
        <dbReference type="ChEBI" id="CHEBI:15379"/>
        <dbReference type="ChEBI" id="CHEBI:17757"/>
        <dbReference type="ChEBI" id="CHEBI:30212"/>
        <dbReference type="ChEBI" id="CHEBI:62192"/>
        <dbReference type="EC" id="1.10.3.9"/>
    </reaction>
</comment>
<comment type="cofactor">
    <text evidence="2">The D1/D2 heterodimer binds P680, chlorophylls that are the primary electron donor of PSII, and subsequent electron acceptors. It shares a non-heme iron and each subunit binds pheophytin, quinone, additional chlorophylls, carotenoids and lipids. There is also a Cl(-1) ion associated with D1 and D2, which is required for oxygen evolution. The PSII complex binds additional chlorophylls, carotenoids and specific lipids.</text>
</comment>
<comment type="subunit">
    <text evidence="2">PSII is composed of 1 copy each of membrane proteins PsbA, PsbB, PsbC, PsbD, PsbE, PsbF, PsbH, PsbI, PsbJ, PsbK, PsbL, PsbM, PsbT, PsbX, PsbY, PsbZ, Psb30/Ycf12, at least 3 peripheral proteins of the oxygen-evolving complex and a large number of cofactors. It forms dimeric complexes.</text>
</comment>
<comment type="subcellular location">
    <subcellularLocation>
        <location evidence="2">Plastid</location>
        <location evidence="2">Chloroplast thylakoid membrane</location>
        <topology evidence="2">Multi-pass membrane protein</topology>
    </subcellularLocation>
</comment>
<comment type="miscellaneous">
    <text evidence="2">2 of the reaction center chlorophylls (ChlD1 and ChlD2) are entirely coordinated by water.</text>
</comment>
<comment type="similarity">
    <text evidence="2">Belongs to the reaction center PufL/M/PsbA/D family.</text>
</comment>
<reference key="1">
    <citation type="submission" date="2008-03" db="EMBL/GenBank/DDBJ databases">
        <title>Guizotia abyssinica chloroplast sequenced using Solexa.</title>
        <authorList>
            <person name="Kane N.C."/>
            <person name="Dempewolf H."/>
            <person name="Stewart M.L."/>
            <person name="Cronk Q."/>
            <person name="Rieseberrg L.H."/>
        </authorList>
    </citation>
    <scope>NUCLEOTIDE SEQUENCE [LARGE SCALE GENOMIC DNA]</scope>
    <source>
        <strain>cv. PI 508077</strain>
    </source>
</reference>
<protein>
    <recommendedName>
        <fullName evidence="2">Photosystem II D2 protein</fullName>
        <shortName evidence="2">PSII D2 protein</shortName>
        <ecNumber evidence="2">1.10.3.9</ecNumber>
    </recommendedName>
    <alternativeName>
        <fullName evidence="2">Photosystem Q(A) protein</fullName>
    </alternativeName>
</protein>
<dbReference type="EC" id="1.10.3.9" evidence="2"/>
<dbReference type="EMBL" id="EU549769">
    <property type="protein sequence ID" value="ACB86522.1"/>
    <property type="molecule type" value="Genomic_DNA"/>
</dbReference>
<dbReference type="RefSeq" id="YP_001837355.1">
    <property type="nucleotide sequence ID" value="NC_010601.1"/>
</dbReference>
<dbReference type="SMR" id="B2LMI8"/>
<dbReference type="GeneID" id="6219103"/>
<dbReference type="GO" id="GO:0009535">
    <property type="term" value="C:chloroplast thylakoid membrane"/>
    <property type="evidence" value="ECO:0007669"/>
    <property type="project" value="UniProtKB-SubCell"/>
</dbReference>
<dbReference type="GO" id="GO:0009523">
    <property type="term" value="C:photosystem II"/>
    <property type="evidence" value="ECO:0007669"/>
    <property type="project" value="UniProtKB-KW"/>
</dbReference>
<dbReference type="GO" id="GO:0016168">
    <property type="term" value="F:chlorophyll binding"/>
    <property type="evidence" value="ECO:0007669"/>
    <property type="project" value="UniProtKB-UniRule"/>
</dbReference>
<dbReference type="GO" id="GO:0045156">
    <property type="term" value="F:electron transporter, transferring electrons within the cyclic electron transport pathway of photosynthesis activity"/>
    <property type="evidence" value="ECO:0007669"/>
    <property type="project" value="InterPro"/>
</dbReference>
<dbReference type="GO" id="GO:0005506">
    <property type="term" value="F:iron ion binding"/>
    <property type="evidence" value="ECO:0007669"/>
    <property type="project" value="UniProtKB-UniRule"/>
</dbReference>
<dbReference type="GO" id="GO:0010242">
    <property type="term" value="F:oxygen evolving activity"/>
    <property type="evidence" value="ECO:0007669"/>
    <property type="project" value="UniProtKB-EC"/>
</dbReference>
<dbReference type="GO" id="GO:0009772">
    <property type="term" value="P:photosynthetic electron transport in photosystem II"/>
    <property type="evidence" value="ECO:0007669"/>
    <property type="project" value="InterPro"/>
</dbReference>
<dbReference type="CDD" id="cd09288">
    <property type="entry name" value="Photosystem-II_D2"/>
    <property type="match status" value="1"/>
</dbReference>
<dbReference type="FunFam" id="1.20.85.10:FF:000001">
    <property type="entry name" value="photosystem II D2 protein-like"/>
    <property type="match status" value="1"/>
</dbReference>
<dbReference type="Gene3D" id="1.20.85.10">
    <property type="entry name" value="Photosystem II protein D1-like"/>
    <property type="match status" value="1"/>
</dbReference>
<dbReference type="HAMAP" id="MF_01383">
    <property type="entry name" value="PSII_PsbD_D2"/>
    <property type="match status" value="1"/>
</dbReference>
<dbReference type="InterPro" id="IPR055266">
    <property type="entry name" value="D1/D2"/>
</dbReference>
<dbReference type="InterPro" id="IPR036854">
    <property type="entry name" value="Photo_II_D1/D2_sf"/>
</dbReference>
<dbReference type="InterPro" id="IPR000484">
    <property type="entry name" value="Photo_RC_L/M"/>
</dbReference>
<dbReference type="InterPro" id="IPR055265">
    <property type="entry name" value="Photo_RC_L/M_CS"/>
</dbReference>
<dbReference type="InterPro" id="IPR005868">
    <property type="entry name" value="PSII_PsbD/D2"/>
</dbReference>
<dbReference type="NCBIfam" id="TIGR01152">
    <property type="entry name" value="psbD"/>
    <property type="match status" value="1"/>
</dbReference>
<dbReference type="PANTHER" id="PTHR33149:SF12">
    <property type="entry name" value="PHOTOSYSTEM II D2 PROTEIN"/>
    <property type="match status" value="1"/>
</dbReference>
<dbReference type="PANTHER" id="PTHR33149">
    <property type="entry name" value="PHOTOSYSTEM II PROTEIN D1"/>
    <property type="match status" value="1"/>
</dbReference>
<dbReference type="Pfam" id="PF00124">
    <property type="entry name" value="Photo_RC"/>
    <property type="match status" value="1"/>
</dbReference>
<dbReference type="PRINTS" id="PR00256">
    <property type="entry name" value="REACTNCENTRE"/>
</dbReference>
<dbReference type="SUPFAM" id="SSF81483">
    <property type="entry name" value="Bacterial photosystem II reaction centre, L and M subunits"/>
    <property type="match status" value="1"/>
</dbReference>
<dbReference type="PROSITE" id="PS00244">
    <property type="entry name" value="REACTION_CENTER"/>
    <property type="match status" value="1"/>
</dbReference>
<feature type="initiator methionine" description="Removed" evidence="1">
    <location>
        <position position="1"/>
    </location>
</feature>
<feature type="chain" id="PRO_0000359655" description="Photosystem II D2 protein">
    <location>
        <begin position="2"/>
        <end position="353"/>
    </location>
</feature>
<feature type="transmembrane region" description="Helical" evidence="2">
    <location>
        <begin position="41"/>
        <end position="61"/>
    </location>
</feature>
<feature type="transmembrane region" description="Helical" evidence="2">
    <location>
        <begin position="125"/>
        <end position="141"/>
    </location>
</feature>
<feature type="transmembrane region" description="Helical" evidence="2">
    <location>
        <begin position="153"/>
        <end position="166"/>
    </location>
</feature>
<feature type="transmembrane region" description="Helical" evidence="2">
    <location>
        <begin position="208"/>
        <end position="228"/>
    </location>
</feature>
<feature type="transmembrane region" description="Helical" evidence="2">
    <location>
        <begin position="279"/>
        <end position="295"/>
    </location>
</feature>
<feature type="binding site" description="axial binding residue" evidence="2">
    <location>
        <position position="118"/>
    </location>
    <ligand>
        <name>chlorophyll a</name>
        <dbReference type="ChEBI" id="CHEBI:58416"/>
        <label>ChlzD2</label>
    </ligand>
    <ligandPart>
        <name>Mg</name>
        <dbReference type="ChEBI" id="CHEBI:25107"/>
    </ligandPart>
</feature>
<feature type="binding site" evidence="2">
    <location>
        <position position="130"/>
    </location>
    <ligand>
        <name>pheophytin a</name>
        <dbReference type="ChEBI" id="CHEBI:136840"/>
        <label>D2</label>
    </ligand>
</feature>
<feature type="binding site" evidence="2">
    <location>
        <position position="143"/>
    </location>
    <ligand>
        <name>pheophytin a</name>
        <dbReference type="ChEBI" id="CHEBI:136840"/>
        <label>D2</label>
    </ligand>
</feature>
<feature type="binding site" description="axial binding residue" evidence="2">
    <location>
        <position position="198"/>
    </location>
    <ligand>
        <name>chlorophyll a</name>
        <dbReference type="ChEBI" id="CHEBI:58416"/>
        <label>PD2</label>
    </ligand>
    <ligandPart>
        <name>Mg</name>
        <dbReference type="ChEBI" id="CHEBI:25107"/>
    </ligandPart>
</feature>
<feature type="binding site" evidence="2">
    <location>
        <position position="215"/>
    </location>
    <ligand>
        <name>a plastoquinone</name>
        <dbReference type="ChEBI" id="CHEBI:17757"/>
        <label>Q(A)</label>
    </ligand>
</feature>
<feature type="binding site" evidence="2">
    <location>
        <position position="215"/>
    </location>
    <ligand>
        <name>Fe cation</name>
        <dbReference type="ChEBI" id="CHEBI:24875"/>
        <note>ligand shared with heterodimeric partner</note>
    </ligand>
</feature>
<feature type="binding site" evidence="2">
    <location>
        <position position="262"/>
    </location>
    <ligand>
        <name>a plastoquinone</name>
        <dbReference type="ChEBI" id="CHEBI:17757"/>
        <label>Q(A)</label>
    </ligand>
</feature>
<feature type="binding site" evidence="2">
    <location>
        <position position="269"/>
    </location>
    <ligand>
        <name>Fe cation</name>
        <dbReference type="ChEBI" id="CHEBI:24875"/>
        <note>ligand shared with heterodimeric partner</note>
    </ligand>
</feature>
<feature type="modified residue" description="N-acetylthreonine" evidence="1">
    <location>
        <position position="2"/>
    </location>
</feature>
<feature type="modified residue" description="Phosphothreonine" evidence="1">
    <location>
        <position position="2"/>
    </location>
</feature>
<geneLocation type="chloroplast"/>
<evidence type="ECO:0000250" key="1">
    <source>
        <dbReference type="UniProtKB" id="P56761"/>
    </source>
</evidence>
<evidence type="ECO:0000255" key="2">
    <source>
        <dbReference type="HAMAP-Rule" id="MF_01383"/>
    </source>
</evidence>
<sequence>MTIALGKFTKDEKDLFDIMDDWLRRDRFVFVGWSGLLLFPCAYFAVGGWFTGTTFVTSWYTHGLASSYLEGCNFLTAAVSTPANSLAHSLLLLWGPEAQGDFTRWCQLGGLWTFVALHGAFGLIGFMLRQFELARSVQLRPYNAIAFSGPIAVFVSVFLIYPLGQSGWFFAPSFGVAAIFRFILFFQGFHNWTLNPFHMMGVAGVLGAALLCAIHGATVENTLFEDGDGANTFRAFNPTQAEETYSMVTANRFWSQIFGVAFSNKRWLHFFILFVPVTGLWMSALGVVGLALNLRAYDFVSQEIRAAEDPEFETFYTKNILLNEGIRAWMAAQDQPHENLIFPEEVLPRGNAL</sequence>
<accession>B2LMI8</accession>
<proteinExistence type="inferred from homology"/>